<comment type="function">
    <text evidence="1">Together with its co-chaperonin GroES, plays an essential role in assisting protein folding. The GroEL-GroES system forms a nano-cage that allows encapsulation of the non-native substrate proteins and provides a physical environment optimized to promote and accelerate protein folding.</text>
</comment>
<comment type="catalytic activity">
    <reaction evidence="1">
        <text>ATP + H2O + a folded polypeptide = ADP + phosphate + an unfolded polypeptide.</text>
        <dbReference type="EC" id="5.6.1.7"/>
    </reaction>
</comment>
<comment type="subunit">
    <text evidence="1">Forms a cylinder of 14 subunits composed of two heptameric rings stacked back-to-back. Interacts with the co-chaperonin GroES.</text>
</comment>
<comment type="subcellular location">
    <subcellularLocation>
        <location evidence="1">Cytoplasm</location>
    </subcellularLocation>
</comment>
<comment type="similarity">
    <text evidence="1">Belongs to the chaperonin (HSP60) family.</text>
</comment>
<gene>
    <name evidence="1" type="primary">groEL</name>
    <name evidence="1" type="synonym">groL</name>
    <name type="ordered locus">BMASAVP1_A0912</name>
</gene>
<accession>A1V1Z9</accession>
<evidence type="ECO:0000255" key="1">
    <source>
        <dbReference type="HAMAP-Rule" id="MF_00600"/>
    </source>
</evidence>
<name>CH60_BURMS</name>
<sequence>MAAKDVVFGDSARAKMVEGVNILANAVKVTLGPKGRNVVLERSFGGPTVTKDGVSVAKEIELKDKLQNMGAQMVKEVASKTSDNAGDGTTTATVLAQSIVREGMKYVASGMNPMDLKRGIDKAVAAAVEELKKISKPCTTNKEIAQVGAISANSDSSIGDRIAEAMDKVGKEGVITVEDGKSLADELDVVEGMQFDRGYLSPYFINNPDKQVAVLENPFVLLHDKKVSNIRDLLPVLEQVAKAGRPLLIIAEDVEGEALATLVVNNIRGILKTVAVKAPGFGDRRKAMLEDIAILTGGQVIAEETGLTLEKATLAELGQAKRIEVGKENTTIIDGAGEAVNIEARVKQIRTQIEEATSDYDREKLQERVAKLAGGVAVIKVGAATEVEMKEKKARVEDALHATRAAVEEGIVPGGGVALIRARTAIASLTGVNADQNAGIKIVLRAMEEPLRQIVTNGGEEASVVVAAVAAGKGNYGYNAATGEYVDMVEAGVVDPTKVTRTALQNAASVAGLLLTTDAAVAELPKEDAPMPGGMPGGMGGMGMGMGMDM</sequence>
<feature type="chain" id="PRO_1000025760" description="Chaperonin GroEL">
    <location>
        <begin position="1"/>
        <end position="550"/>
    </location>
</feature>
<feature type="binding site" evidence="1">
    <location>
        <begin position="30"/>
        <end position="33"/>
    </location>
    <ligand>
        <name>ATP</name>
        <dbReference type="ChEBI" id="CHEBI:30616"/>
    </ligand>
</feature>
<feature type="binding site" evidence="1">
    <location>
        <position position="51"/>
    </location>
    <ligand>
        <name>ATP</name>
        <dbReference type="ChEBI" id="CHEBI:30616"/>
    </ligand>
</feature>
<feature type="binding site" evidence="1">
    <location>
        <begin position="87"/>
        <end position="91"/>
    </location>
    <ligand>
        <name>ATP</name>
        <dbReference type="ChEBI" id="CHEBI:30616"/>
    </ligand>
</feature>
<feature type="binding site" evidence="1">
    <location>
        <position position="415"/>
    </location>
    <ligand>
        <name>ATP</name>
        <dbReference type="ChEBI" id="CHEBI:30616"/>
    </ligand>
</feature>
<feature type="binding site" evidence="1">
    <location>
        <begin position="479"/>
        <end position="481"/>
    </location>
    <ligand>
        <name>ATP</name>
        <dbReference type="ChEBI" id="CHEBI:30616"/>
    </ligand>
</feature>
<feature type="binding site" evidence="1">
    <location>
        <position position="495"/>
    </location>
    <ligand>
        <name>ATP</name>
        <dbReference type="ChEBI" id="CHEBI:30616"/>
    </ligand>
</feature>
<organism>
    <name type="scientific">Burkholderia mallei (strain SAVP1)</name>
    <dbReference type="NCBI Taxonomy" id="320388"/>
    <lineage>
        <taxon>Bacteria</taxon>
        <taxon>Pseudomonadati</taxon>
        <taxon>Pseudomonadota</taxon>
        <taxon>Betaproteobacteria</taxon>
        <taxon>Burkholderiales</taxon>
        <taxon>Burkholderiaceae</taxon>
        <taxon>Burkholderia</taxon>
        <taxon>pseudomallei group</taxon>
    </lineage>
</organism>
<dbReference type="EC" id="5.6.1.7" evidence="1"/>
<dbReference type="EMBL" id="CP000526">
    <property type="protein sequence ID" value="ABM52503.1"/>
    <property type="molecule type" value="Genomic_DNA"/>
</dbReference>
<dbReference type="RefSeq" id="WP_004185913.1">
    <property type="nucleotide sequence ID" value="NC_008785.1"/>
</dbReference>
<dbReference type="SMR" id="A1V1Z9"/>
<dbReference type="GeneID" id="92979713"/>
<dbReference type="KEGG" id="bmv:BMASAVP1_A0912"/>
<dbReference type="HOGENOM" id="CLU_016503_3_0_4"/>
<dbReference type="GO" id="GO:0005737">
    <property type="term" value="C:cytoplasm"/>
    <property type="evidence" value="ECO:0007669"/>
    <property type="project" value="UniProtKB-SubCell"/>
</dbReference>
<dbReference type="GO" id="GO:0005524">
    <property type="term" value="F:ATP binding"/>
    <property type="evidence" value="ECO:0007669"/>
    <property type="project" value="UniProtKB-UniRule"/>
</dbReference>
<dbReference type="GO" id="GO:0140662">
    <property type="term" value="F:ATP-dependent protein folding chaperone"/>
    <property type="evidence" value="ECO:0007669"/>
    <property type="project" value="InterPro"/>
</dbReference>
<dbReference type="GO" id="GO:0016853">
    <property type="term" value="F:isomerase activity"/>
    <property type="evidence" value="ECO:0007669"/>
    <property type="project" value="UniProtKB-KW"/>
</dbReference>
<dbReference type="GO" id="GO:0051082">
    <property type="term" value="F:unfolded protein binding"/>
    <property type="evidence" value="ECO:0007669"/>
    <property type="project" value="UniProtKB-UniRule"/>
</dbReference>
<dbReference type="GO" id="GO:0042026">
    <property type="term" value="P:protein refolding"/>
    <property type="evidence" value="ECO:0007669"/>
    <property type="project" value="UniProtKB-UniRule"/>
</dbReference>
<dbReference type="CDD" id="cd03344">
    <property type="entry name" value="GroEL"/>
    <property type="match status" value="1"/>
</dbReference>
<dbReference type="FunFam" id="1.10.560.10:FF:000001">
    <property type="entry name" value="60 kDa chaperonin"/>
    <property type="match status" value="1"/>
</dbReference>
<dbReference type="FunFam" id="3.50.7.10:FF:000001">
    <property type="entry name" value="60 kDa chaperonin"/>
    <property type="match status" value="1"/>
</dbReference>
<dbReference type="Gene3D" id="3.50.7.10">
    <property type="entry name" value="GroEL"/>
    <property type="match status" value="1"/>
</dbReference>
<dbReference type="Gene3D" id="1.10.560.10">
    <property type="entry name" value="GroEL-like equatorial domain"/>
    <property type="match status" value="1"/>
</dbReference>
<dbReference type="Gene3D" id="3.30.260.10">
    <property type="entry name" value="TCP-1-like chaperonin intermediate domain"/>
    <property type="match status" value="1"/>
</dbReference>
<dbReference type="HAMAP" id="MF_00600">
    <property type="entry name" value="CH60"/>
    <property type="match status" value="1"/>
</dbReference>
<dbReference type="InterPro" id="IPR018370">
    <property type="entry name" value="Chaperonin_Cpn60_CS"/>
</dbReference>
<dbReference type="InterPro" id="IPR001844">
    <property type="entry name" value="Cpn60/GroEL"/>
</dbReference>
<dbReference type="InterPro" id="IPR002423">
    <property type="entry name" value="Cpn60/GroEL/TCP-1"/>
</dbReference>
<dbReference type="InterPro" id="IPR027409">
    <property type="entry name" value="GroEL-like_apical_dom_sf"/>
</dbReference>
<dbReference type="InterPro" id="IPR027413">
    <property type="entry name" value="GROEL-like_equatorial_sf"/>
</dbReference>
<dbReference type="InterPro" id="IPR027410">
    <property type="entry name" value="TCP-1-like_intermed_sf"/>
</dbReference>
<dbReference type="NCBIfam" id="TIGR02348">
    <property type="entry name" value="GroEL"/>
    <property type="match status" value="1"/>
</dbReference>
<dbReference type="NCBIfam" id="NF000592">
    <property type="entry name" value="PRK00013.1"/>
    <property type="match status" value="1"/>
</dbReference>
<dbReference type="NCBIfam" id="NF009487">
    <property type="entry name" value="PRK12849.1"/>
    <property type="match status" value="1"/>
</dbReference>
<dbReference type="NCBIfam" id="NF009488">
    <property type="entry name" value="PRK12850.1"/>
    <property type="match status" value="1"/>
</dbReference>
<dbReference type="NCBIfam" id="NF009489">
    <property type="entry name" value="PRK12851.1"/>
    <property type="match status" value="1"/>
</dbReference>
<dbReference type="PANTHER" id="PTHR45633">
    <property type="entry name" value="60 KDA HEAT SHOCK PROTEIN, MITOCHONDRIAL"/>
    <property type="match status" value="1"/>
</dbReference>
<dbReference type="Pfam" id="PF00118">
    <property type="entry name" value="Cpn60_TCP1"/>
    <property type="match status" value="1"/>
</dbReference>
<dbReference type="PRINTS" id="PR00298">
    <property type="entry name" value="CHAPERONIN60"/>
</dbReference>
<dbReference type="SUPFAM" id="SSF52029">
    <property type="entry name" value="GroEL apical domain-like"/>
    <property type="match status" value="1"/>
</dbReference>
<dbReference type="SUPFAM" id="SSF48592">
    <property type="entry name" value="GroEL equatorial domain-like"/>
    <property type="match status" value="1"/>
</dbReference>
<dbReference type="SUPFAM" id="SSF54849">
    <property type="entry name" value="GroEL-intermediate domain like"/>
    <property type="match status" value="1"/>
</dbReference>
<dbReference type="PROSITE" id="PS00296">
    <property type="entry name" value="CHAPERONINS_CPN60"/>
    <property type="match status" value="1"/>
</dbReference>
<proteinExistence type="inferred from homology"/>
<keyword id="KW-0067">ATP-binding</keyword>
<keyword id="KW-0143">Chaperone</keyword>
<keyword id="KW-0963">Cytoplasm</keyword>
<keyword id="KW-0413">Isomerase</keyword>
<keyword id="KW-0547">Nucleotide-binding</keyword>
<reference key="1">
    <citation type="journal article" date="2010" name="Genome Biol. Evol.">
        <title>Continuing evolution of Burkholderia mallei through genome reduction and large-scale rearrangements.</title>
        <authorList>
            <person name="Losada L."/>
            <person name="Ronning C.M."/>
            <person name="DeShazer D."/>
            <person name="Woods D."/>
            <person name="Fedorova N."/>
            <person name="Kim H.S."/>
            <person name="Shabalina S.A."/>
            <person name="Pearson T.R."/>
            <person name="Brinkac L."/>
            <person name="Tan P."/>
            <person name="Nandi T."/>
            <person name="Crabtree J."/>
            <person name="Badger J."/>
            <person name="Beckstrom-Sternberg S."/>
            <person name="Saqib M."/>
            <person name="Schutzer S.E."/>
            <person name="Keim P."/>
            <person name="Nierman W.C."/>
        </authorList>
    </citation>
    <scope>NUCLEOTIDE SEQUENCE [LARGE SCALE GENOMIC DNA]</scope>
    <source>
        <strain>SAVP1</strain>
    </source>
</reference>
<protein>
    <recommendedName>
        <fullName evidence="1">Chaperonin GroEL</fullName>
        <ecNumber evidence="1">5.6.1.7</ecNumber>
    </recommendedName>
    <alternativeName>
        <fullName evidence="1">60 kDa chaperonin</fullName>
    </alternativeName>
    <alternativeName>
        <fullName evidence="1">Chaperonin-60</fullName>
        <shortName evidence="1">Cpn60</shortName>
    </alternativeName>
</protein>